<protein>
    <recommendedName>
        <fullName evidence="7">Hydroxyproline O-arabinosyltransferase NOD3</fullName>
        <ecNumber evidence="7">2.4.2.58</ecNumber>
    </recommendedName>
    <alternativeName>
        <fullName evidence="7">Protein NODULATION 3</fullName>
        <shortName evidence="6">PsNOD3</shortName>
    </alternativeName>
</protein>
<feature type="chain" id="PRO_5007654557" description="Hydroxyproline O-arabinosyltransferase NOD3">
    <location>
        <begin position="1" status="less than"/>
        <end position="334" status="greater than"/>
    </location>
</feature>
<feature type="transmembrane region" description="Helical; Signal-anchor" evidence="2">
    <location>
        <begin position="1" status="less than"/>
        <end position="18"/>
    </location>
</feature>
<feature type="non-terminal residue">
    <location>
        <position position="1"/>
    </location>
</feature>
<feature type="non-terminal residue">
    <location>
        <position position="334"/>
    </location>
</feature>
<gene>
    <name evidence="5" type="primary">NOD3</name>
</gene>
<name>NOD3_PEA</name>
<proteinExistence type="evidence at transcript level"/>
<dbReference type="EC" id="2.4.2.58" evidence="7"/>
<dbReference type="EMBL" id="GU580938">
    <property type="protein sequence ID" value="ADV35717.1"/>
    <property type="molecule type" value="Genomic_DNA"/>
</dbReference>
<dbReference type="EMBL" id="GU580939">
    <property type="protein sequence ID" value="ADV35718.1"/>
    <property type="molecule type" value="mRNA"/>
</dbReference>
<dbReference type="GO" id="GO:0000139">
    <property type="term" value="C:Golgi membrane"/>
    <property type="evidence" value="ECO:0007669"/>
    <property type="project" value="UniProtKB-SubCell"/>
</dbReference>
<dbReference type="GO" id="GO:1990585">
    <property type="term" value="F:hydroxyproline O-arabinosyltransferase activity"/>
    <property type="evidence" value="ECO:0007669"/>
    <property type="project" value="UniProtKB-EC"/>
</dbReference>
<dbReference type="InterPro" id="IPR056508">
    <property type="entry name" value="HPAT-like"/>
</dbReference>
<dbReference type="InterPro" id="IPR044845">
    <property type="entry name" value="HPAT/SRGT1-like"/>
</dbReference>
<dbReference type="PANTHER" id="PTHR31485:SF4">
    <property type="entry name" value="HYDROXYPROLINE O-ARABINOSYLTRANSFERASE RDN1"/>
    <property type="match status" value="1"/>
</dbReference>
<dbReference type="PANTHER" id="PTHR31485">
    <property type="entry name" value="PEPTIDYL SERINE ALPHA-GALACTOSYLTRANSFERASE"/>
    <property type="match status" value="1"/>
</dbReference>
<dbReference type="Pfam" id="PF23452">
    <property type="entry name" value="HPAT"/>
    <property type="match status" value="1"/>
</dbReference>
<accession>E9KID3</accession>
<organism>
    <name type="scientific">Pisum sativum</name>
    <name type="common">Garden pea</name>
    <name type="synonym">Lathyrus oleraceus</name>
    <dbReference type="NCBI Taxonomy" id="3888"/>
    <lineage>
        <taxon>Eukaryota</taxon>
        <taxon>Viridiplantae</taxon>
        <taxon>Streptophyta</taxon>
        <taxon>Embryophyta</taxon>
        <taxon>Tracheophyta</taxon>
        <taxon>Spermatophyta</taxon>
        <taxon>Magnoliopsida</taxon>
        <taxon>eudicotyledons</taxon>
        <taxon>Gunneridae</taxon>
        <taxon>Pentapetalae</taxon>
        <taxon>rosids</taxon>
        <taxon>fabids</taxon>
        <taxon>Fabales</taxon>
        <taxon>Fabaceae</taxon>
        <taxon>Papilionoideae</taxon>
        <taxon>50 kb inversion clade</taxon>
        <taxon>NPAAA clade</taxon>
        <taxon>Hologalegina</taxon>
        <taxon>IRL clade</taxon>
        <taxon>Fabeae</taxon>
        <taxon>Pisum</taxon>
    </lineage>
</organism>
<keyword id="KW-0328">Glycosyltransferase</keyword>
<keyword id="KW-0333">Golgi apparatus</keyword>
<keyword id="KW-0472">Membrane</keyword>
<keyword id="KW-0735">Signal-anchor</keyword>
<keyword id="KW-0808">Transferase</keyword>
<keyword id="KW-0812">Transmembrane</keyword>
<keyword id="KW-1133">Transmembrane helix</keyword>
<comment type="function">
    <text evidence="1 3 4">Probable glycosyltransferase involved in the O-arabinosylation of several proteins including extensins and small signaling peptides (By similarity). Catalyzes the transfer of the initial L-arabinose to the hydroxyl group of Hyp residues (By similarity). Probably involved in the arabinosylation of CLAVATA3/ESR-related (CLE) signaling peptides that move from root to shoot, to interact with receptor kinase signaling that regulates nodulation (By similarity). Involved in long distance nodulation signaling events (PubMed:21742814, PubMed:21802605). Involved in the autoregulation of nodulation (AON), a long distance systemic signaling from root to shoot and back again, which allows legumes to limit the number of root nodules formed based on available nitrogen and previous rhizobial colonization (PubMed:21742814, PubMed:21802605).</text>
</comment>
<comment type="catalytic activity">
    <reaction evidence="7">
        <text>trans-4-hydroxy-L-prolyl-[protein] + UDP-beta-L-arabinofuranose = O-(beta-L-arabinofuranosyl)-trans-4-hydroxy-L-prolyl-[protein] + UDP + H(+)</text>
        <dbReference type="Rhea" id="RHEA:49472"/>
        <dbReference type="Rhea" id="RHEA-COMP:12408"/>
        <dbReference type="Rhea" id="RHEA-COMP:12409"/>
        <dbReference type="ChEBI" id="CHEBI:15378"/>
        <dbReference type="ChEBI" id="CHEBI:58223"/>
        <dbReference type="ChEBI" id="CHEBI:61463"/>
        <dbReference type="ChEBI" id="CHEBI:61965"/>
        <dbReference type="ChEBI" id="CHEBI:131610"/>
        <dbReference type="EC" id="2.4.2.58"/>
    </reaction>
    <physiologicalReaction direction="left-to-right" evidence="7">
        <dbReference type="Rhea" id="RHEA:49473"/>
    </physiologicalReaction>
</comment>
<comment type="subcellular location">
    <subcellularLocation>
        <location evidence="1">Golgi apparatus membrane</location>
        <topology evidence="2">Single-pass type II membrane protein</topology>
    </subcellularLocation>
</comment>
<comment type="disruption phenotype">
    <text evidence="3 4">Dramatic increase in root nodule number when inoculated with Rhizobium strains (PubMed:21742814, PubMed:21802605). Inhibition of root growth in both the presence and absence of rhizobia (PubMed:21742814, PubMed:21802605).</text>
</comment>
<comment type="similarity">
    <text evidence="7">Belongs to the RDN family.</text>
</comment>
<reference key="1">
    <citation type="journal article" date="2011" name="Plant Physiol.">
        <title>The ROOT DETERMINED NODULATION1 gene regulates nodule number in roots of Medicago truncatula and defines a highly conserved, uncharacterized plant gene family.</title>
        <authorList>
            <person name="Schnabel E.L."/>
            <person name="Kassaw T.K."/>
            <person name="Smith L.S."/>
            <person name="Marsh J.F."/>
            <person name="Oldroyd G.E."/>
            <person name="Long S.R."/>
            <person name="Frugoli J.A."/>
        </authorList>
    </citation>
    <scope>NUCLEOTIDE SEQUENCE [GENOMIC DNA / MRNA]</scope>
    <scope>FUNCTION</scope>
    <scope>DISRUPTION PHENOTYPE</scope>
</reference>
<reference key="2">
    <citation type="journal article" date="2010" name="Plant Sci.">
        <title>Early action of pea symbiotic gene NOD3 is confirmed by adventitious root phenotype.</title>
        <authorList>
            <person name="Novak K."/>
        </authorList>
    </citation>
    <scope>FUNCTION</scope>
    <scope>DISRUPTION PHENOTYPE</scope>
</reference>
<sequence length="334" mass="38110">LLMVLGFFFATYNLVSMIVGHKVGSDLGSIVDGKVEFTNTKSKFHVAVTATDAAYSQWQCRIMYYWYKKAKDMPGSAMGKFTRILHSGKEDQLMNEIPTFVVDPLPDGLDRGYIVLNRPWAFVQWLEKAVIDEEYILMAEPDHIFVNPLPNLASENEPAGYPFFYIKPAENEKIMRKFYPKEKGPVTDVDPIGNSPVIIHKYLLEEIAPTWVNVSLRMKDDPETDKVFGWVLEMYAYAVASALHGIKHTLRKDFMLQPPWDLEVGKTFIIHYTYGCDYNLKGKLTYGKIGEWRFDKRSYLMSPPPKNISLPPPGVPESVVRLVKMVNEATANIP</sequence>
<evidence type="ECO:0000250" key="1">
    <source>
        <dbReference type="UniProtKB" id="E9KID2"/>
    </source>
</evidence>
<evidence type="ECO:0000255" key="2"/>
<evidence type="ECO:0000269" key="3">
    <source>
    </source>
</evidence>
<evidence type="ECO:0000269" key="4">
    <source>
    </source>
</evidence>
<evidence type="ECO:0000303" key="5">
    <source>
    </source>
</evidence>
<evidence type="ECO:0000303" key="6">
    <source>
    </source>
</evidence>
<evidence type="ECO:0000305" key="7"/>